<reference key="1">
    <citation type="journal article" date="2007" name="Proc. Natl. Acad. Sci. U.S.A.">
        <title>The genome of Syntrophus aciditrophicus: life at the thermodynamic limit of microbial growth.</title>
        <authorList>
            <person name="McInerney M.J."/>
            <person name="Rohlin L."/>
            <person name="Mouttaki H."/>
            <person name="Kim U."/>
            <person name="Krupp R.S."/>
            <person name="Rios-Hernandez L."/>
            <person name="Sieber J."/>
            <person name="Struchtemeyer C.G."/>
            <person name="Bhattacharyya A."/>
            <person name="Campbell J.W."/>
            <person name="Gunsalus R.P."/>
        </authorList>
    </citation>
    <scope>NUCLEOTIDE SEQUENCE [LARGE SCALE GENOMIC DNA]</scope>
    <source>
        <strain>SB</strain>
    </source>
</reference>
<feature type="chain" id="PRO_0000232827" description="Phenylalanine--tRNA ligase beta subunit">
    <location>
        <begin position="1"/>
        <end position="804"/>
    </location>
</feature>
<feature type="domain" description="tRNA-binding" evidence="1">
    <location>
        <begin position="39"/>
        <end position="147"/>
    </location>
</feature>
<feature type="domain" description="B5" evidence="1">
    <location>
        <begin position="402"/>
        <end position="480"/>
    </location>
</feature>
<feature type="domain" description="FDX-ACB" evidence="1">
    <location>
        <begin position="711"/>
        <end position="804"/>
    </location>
</feature>
<feature type="binding site" evidence="1">
    <location>
        <position position="458"/>
    </location>
    <ligand>
        <name>Mg(2+)</name>
        <dbReference type="ChEBI" id="CHEBI:18420"/>
        <note>shared with alpha subunit</note>
    </ligand>
</feature>
<feature type="binding site" evidence="1">
    <location>
        <position position="464"/>
    </location>
    <ligand>
        <name>Mg(2+)</name>
        <dbReference type="ChEBI" id="CHEBI:18420"/>
        <note>shared with alpha subunit</note>
    </ligand>
</feature>
<feature type="binding site" evidence="1">
    <location>
        <position position="467"/>
    </location>
    <ligand>
        <name>Mg(2+)</name>
        <dbReference type="ChEBI" id="CHEBI:18420"/>
        <note>shared with alpha subunit</note>
    </ligand>
</feature>
<feature type="binding site" evidence="1">
    <location>
        <position position="468"/>
    </location>
    <ligand>
        <name>Mg(2+)</name>
        <dbReference type="ChEBI" id="CHEBI:18420"/>
        <note>shared with alpha subunit</note>
    </ligand>
</feature>
<name>SYFB_SYNAS</name>
<keyword id="KW-0030">Aminoacyl-tRNA synthetase</keyword>
<keyword id="KW-0067">ATP-binding</keyword>
<keyword id="KW-0963">Cytoplasm</keyword>
<keyword id="KW-0436">Ligase</keyword>
<keyword id="KW-0460">Magnesium</keyword>
<keyword id="KW-0479">Metal-binding</keyword>
<keyword id="KW-0547">Nucleotide-binding</keyword>
<keyword id="KW-0648">Protein biosynthesis</keyword>
<keyword id="KW-1185">Reference proteome</keyword>
<keyword id="KW-0694">RNA-binding</keyword>
<keyword id="KW-0820">tRNA-binding</keyword>
<gene>
    <name evidence="1" type="primary">pheT</name>
    <name type="ordered locus">SYNAS_06580</name>
    <name type="ORF">SYN_01723</name>
</gene>
<comment type="catalytic activity">
    <reaction evidence="1">
        <text>tRNA(Phe) + L-phenylalanine + ATP = L-phenylalanyl-tRNA(Phe) + AMP + diphosphate + H(+)</text>
        <dbReference type="Rhea" id="RHEA:19413"/>
        <dbReference type="Rhea" id="RHEA-COMP:9668"/>
        <dbReference type="Rhea" id="RHEA-COMP:9699"/>
        <dbReference type="ChEBI" id="CHEBI:15378"/>
        <dbReference type="ChEBI" id="CHEBI:30616"/>
        <dbReference type="ChEBI" id="CHEBI:33019"/>
        <dbReference type="ChEBI" id="CHEBI:58095"/>
        <dbReference type="ChEBI" id="CHEBI:78442"/>
        <dbReference type="ChEBI" id="CHEBI:78531"/>
        <dbReference type="ChEBI" id="CHEBI:456215"/>
        <dbReference type="EC" id="6.1.1.20"/>
    </reaction>
</comment>
<comment type="cofactor">
    <cofactor evidence="1">
        <name>Mg(2+)</name>
        <dbReference type="ChEBI" id="CHEBI:18420"/>
    </cofactor>
    <text evidence="1">Binds 2 magnesium ions per tetramer.</text>
</comment>
<comment type="subunit">
    <text evidence="1">Tetramer of two alpha and two beta subunits.</text>
</comment>
<comment type="subcellular location">
    <subcellularLocation>
        <location evidence="1">Cytoplasm</location>
    </subcellularLocation>
</comment>
<comment type="similarity">
    <text evidence="1">Belongs to the phenylalanyl-tRNA synthetase beta subunit family. Type 1 subfamily.</text>
</comment>
<accession>Q2LR26</accession>
<dbReference type="EC" id="6.1.1.20" evidence="1"/>
<dbReference type="EMBL" id="CP000252">
    <property type="protein sequence ID" value="ABC76537.1"/>
    <property type="molecule type" value="Genomic_DNA"/>
</dbReference>
<dbReference type="RefSeq" id="WP_011416571.1">
    <property type="nucleotide sequence ID" value="NC_007759.1"/>
</dbReference>
<dbReference type="SMR" id="Q2LR26"/>
<dbReference type="FunCoup" id="Q2LR26">
    <property type="interactions" value="453"/>
</dbReference>
<dbReference type="STRING" id="56780.SYN_01723"/>
<dbReference type="KEGG" id="sat:SYN_01723"/>
<dbReference type="eggNOG" id="COG0072">
    <property type="taxonomic scope" value="Bacteria"/>
</dbReference>
<dbReference type="HOGENOM" id="CLU_016891_0_0_7"/>
<dbReference type="InParanoid" id="Q2LR26"/>
<dbReference type="OrthoDB" id="9805455at2"/>
<dbReference type="Proteomes" id="UP000001933">
    <property type="component" value="Chromosome"/>
</dbReference>
<dbReference type="GO" id="GO:0009328">
    <property type="term" value="C:phenylalanine-tRNA ligase complex"/>
    <property type="evidence" value="ECO:0007669"/>
    <property type="project" value="TreeGrafter"/>
</dbReference>
<dbReference type="GO" id="GO:0005524">
    <property type="term" value="F:ATP binding"/>
    <property type="evidence" value="ECO:0007669"/>
    <property type="project" value="UniProtKB-UniRule"/>
</dbReference>
<dbReference type="GO" id="GO:0000287">
    <property type="term" value="F:magnesium ion binding"/>
    <property type="evidence" value="ECO:0007669"/>
    <property type="project" value="UniProtKB-UniRule"/>
</dbReference>
<dbReference type="GO" id="GO:0004826">
    <property type="term" value="F:phenylalanine-tRNA ligase activity"/>
    <property type="evidence" value="ECO:0007669"/>
    <property type="project" value="UniProtKB-UniRule"/>
</dbReference>
<dbReference type="GO" id="GO:0000049">
    <property type="term" value="F:tRNA binding"/>
    <property type="evidence" value="ECO:0007669"/>
    <property type="project" value="UniProtKB-KW"/>
</dbReference>
<dbReference type="GO" id="GO:0006432">
    <property type="term" value="P:phenylalanyl-tRNA aminoacylation"/>
    <property type="evidence" value="ECO:0007669"/>
    <property type="project" value="UniProtKB-UniRule"/>
</dbReference>
<dbReference type="CDD" id="cd00769">
    <property type="entry name" value="PheRS_beta_core"/>
    <property type="match status" value="1"/>
</dbReference>
<dbReference type="CDD" id="cd02796">
    <property type="entry name" value="tRNA_bind_bactPheRS"/>
    <property type="match status" value="1"/>
</dbReference>
<dbReference type="FunFam" id="2.40.50.140:FF:000045">
    <property type="entry name" value="Phenylalanine--tRNA ligase beta subunit"/>
    <property type="match status" value="1"/>
</dbReference>
<dbReference type="FunFam" id="3.30.56.10:FF:000002">
    <property type="entry name" value="Phenylalanine--tRNA ligase beta subunit"/>
    <property type="match status" value="1"/>
</dbReference>
<dbReference type="FunFam" id="3.30.70.380:FF:000001">
    <property type="entry name" value="Phenylalanine--tRNA ligase beta subunit"/>
    <property type="match status" value="1"/>
</dbReference>
<dbReference type="FunFam" id="3.30.930.10:FF:000022">
    <property type="entry name" value="Phenylalanine--tRNA ligase beta subunit"/>
    <property type="match status" value="1"/>
</dbReference>
<dbReference type="FunFam" id="3.50.40.10:FF:000001">
    <property type="entry name" value="Phenylalanine--tRNA ligase beta subunit"/>
    <property type="match status" value="1"/>
</dbReference>
<dbReference type="Gene3D" id="3.30.56.10">
    <property type="match status" value="2"/>
</dbReference>
<dbReference type="Gene3D" id="3.30.930.10">
    <property type="entry name" value="Bira Bifunctional Protein, Domain 2"/>
    <property type="match status" value="1"/>
</dbReference>
<dbReference type="Gene3D" id="3.30.70.380">
    <property type="entry name" value="Ferrodoxin-fold anticodon-binding domain"/>
    <property type="match status" value="1"/>
</dbReference>
<dbReference type="Gene3D" id="2.40.50.140">
    <property type="entry name" value="Nucleic acid-binding proteins"/>
    <property type="match status" value="1"/>
</dbReference>
<dbReference type="Gene3D" id="3.50.40.10">
    <property type="entry name" value="Phenylalanyl-trna Synthetase, Chain B, domain 3"/>
    <property type="match status" value="1"/>
</dbReference>
<dbReference type="HAMAP" id="MF_00283">
    <property type="entry name" value="Phe_tRNA_synth_beta1"/>
    <property type="match status" value="1"/>
</dbReference>
<dbReference type="InterPro" id="IPR045864">
    <property type="entry name" value="aa-tRNA-synth_II/BPL/LPL"/>
</dbReference>
<dbReference type="InterPro" id="IPR005146">
    <property type="entry name" value="B3/B4_tRNA-bd"/>
</dbReference>
<dbReference type="InterPro" id="IPR009061">
    <property type="entry name" value="DNA-bd_dom_put_sf"/>
</dbReference>
<dbReference type="InterPro" id="IPR005121">
    <property type="entry name" value="Fdx_antiC-bd"/>
</dbReference>
<dbReference type="InterPro" id="IPR036690">
    <property type="entry name" value="Fdx_antiC-bd_sf"/>
</dbReference>
<dbReference type="InterPro" id="IPR012340">
    <property type="entry name" value="NA-bd_OB-fold"/>
</dbReference>
<dbReference type="InterPro" id="IPR045060">
    <property type="entry name" value="Phe-tRNA-ligase_IIc_bsu"/>
</dbReference>
<dbReference type="InterPro" id="IPR004532">
    <property type="entry name" value="Phe-tRNA-ligase_IIc_bsu_bact"/>
</dbReference>
<dbReference type="InterPro" id="IPR020825">
    <property type="entry name" value="Phe-tRNA_synthase-like_B3/B4"/>
</dbReference>
<dbReference type="InterPro" id="IPR041616">
    <property type="entry name" value="PheRS_beta_core"/>
</dbReference>
<dbReference type="InterPro" id="IPR002547">
    <property type="entry name" value="tRNA-bd_dom"/>
</dbReference>
<dbReference type="InterPro" id="IPR033714">
    <property type="entry name" value="tRNA_bind_bactPheRS"/>
</dbReference>
<dbReference type="InterPro" id="IPR005147">
    <property type="entry name" value="tRNA_synthase_B5-dom"/>
</dbReference>
<dbReference type="NCBIfam" id="TIGR00472">
    <property type="entry name" value="pheT_bact"/>
    <property type="match status" value="1"/>
</dbReference>
<dbReference type="NCBIfam" id="NF045760">
    <property type="entry name" value="YtpR"/>
    <property type="match status" value="1"/>
</dbReference>
<dbReference type="PANTHER" id="PTHR10947:SF0">
    <property type="entry name" value="PHENYLALANINE--TRNA LIGASE BETA SUBUNIT"/>
    <property type="match status" value="1"/>
</dbReference>
<dbReference type="PANTHER" id="PTHR10947">
    <property type="entry name" value="PHENYLALANYL-TRNA SYNTHETASE BETA CHAIN AND LEUCINE-RICH REPEAT-CONTAINING PROTEIN 47"/>
    <property type="match status" value="1"/>
</dbReference>
<dbReference type="Pfam" id="PF03483">
    <property type="entry name" value="B3_4"/>
    <property type="match status" value="1"/>
</dbReference>
<dbReference type="Pfam" id="PF03484">
    <property type="entry name" value="B5"/>
    <property type="match status" value="1"/>
</dbReference>
<dbReference type="Pfam" id="PF03147">
    <property type="entry name" value="FDX-ACB"/>
    <property type="match status" value="1"/>
</dbReference>
<dbReference type="Pfam" id="PF01588">
    <property type="entry name" value="tRNA_bind"/>
    <property type="match status" value="1"/>
</dbReference>
<dbReference type="Pfam" id="PF17759">
    <property type="entry name" value="tRNA_synthFbeta"/>
    <property type="match status" value="1"/>
</dbReference>
<dbReference type="SMART" id="SM00873">
    <property type="entry name" value="B3_4"/>
    <property type="match status" value="1"/>
</dbReference>
<dbReference type="SMART" id="SM00874">
    <property type="entry name" value="B5"/>
    <property type="match status" value="1"/>
</dbReference>
<dbReference type="SMART" id="SM00896">
    <property type="entry name" value="FDX-ACB"/>
    <property type="match status" value="1"/>
</dbReference>
<dbReference type="SUPFAM" id="SSF54991">
    <property type="entry name" value="Anticodon-binding domain of PheRS"/>
    <property type="match status" value="1"/>
</dbReference>
<dbReference type="SUPFAM" id="SSF55681">
    <property type="entry name" value="Class II aaRS and biotin synthetases"/>
    <property type="match status" value="1"/>
</dbReference>
<dbReference type="SUPFAM" id="SSF50249">
    <property type="entry name" value="Nucleic acid-binding proteins"/>
    <property type="match status" value="1"/>
</dbReference>
<dbReference type="SUPFAM" id="SSF56037">
    <property type="entry name" value="PheT/TilS domain"/>
    <property type="match status" value="1"/>
</dbReference>
<dbReference type="SUPFAM" id="SSF46955">
    <property type="entry name" value="Putative DNA-binding domain"/>
    <property type="match status" value="1"/>
</dbReference>
<dbReference type="PROSITE" id="PS51483">
    <property type="entry name" value="B5"/>
    <property type="match status" value="1"/>
</dbReference>
<dbReference type="PROSITE" id="PS51447">
    <property type="entry name" value="FDX_ACB"/>
    <property type="match status" value="1"/>
</dbReference>
<dbReference type="PROSITE" id="PS50886">
    <property type="entry name" value="TRBD"/>
    <property type="match status" value="1"/>
</dbReference>
<organism>
    <name type="scientific">Syntrophus aciditrophicus (strain SB)</name>
    <dbReference type="NCBI Taxonomy" id="56780"/>
    <lineage>
        <taxon>Bacteria</taxon>
        <taxon>Pseudomonadati</taxon>
        <taxon>Thermodesulfobacteriota</taxon>
        <taxon>Syntrophia</taxon>
        <taxon>Syntrophales</taxon>
        <taxon>Syntrophaceae</taxon>
        <taxon>Syntrophus</taxon>
    </lineage>
</organism>
<protein>
    <recommendedName>
        <fullName evidence="1">Phenylalanine--tRNA ligase beta subunit</fullName>
        <ecNumber evidence="1">6.1.1.20</ecNumber>
    </recommendedName>
    <alternativeName>
        <fullName evidence="1">Phenylalanyl-tRNA synthetase beta subunit</fullName>
        <shortName evidence="1">PheRS</shortName>
    </alternativeName>
</protein>
<evidence type="ECO:0000255" key="1">
    <source>
        <dbReference type="HAMAP-Rule" id="MF_00283"/>
    </source>
</evidence>
<proteinExistence type="inferred from homology"/>
<sequence length="804" mass="88748">MQVSLRWLKDYVDIDLTPAEVSDRLTMAGLEVDAVREVGPSFSNVVVARIIALRRHPNADKLSLCEVTTGDETLPIVCGAPNIHVGDVVPLARIGAEIPGGYTIKRSKIRGELSEGMLCSEEELGIGEDTTGVMILPPNLPLGEDLADVLDLKDTVFDIGITPNRSDCLSIIGVAREIAAITGKPLKLPEIYVTENAEDIQVSASVQILDPDLCPHYTARMIRDVVVGPSPQWMRLRLEAVGLRSISNVVDVTNFVMMELGQPLHAFDYRFLEEGRIVVRRSTEGEKFISLDEKERVLNANTLMICDGVKPVAIAGIMGGFNSEIKPDTRDILLESAYFAPSSIRRSARDLGMSTDAAFRFERGIDPEGVLRALDRAAQLIAELSGGKICKGRIDEHPKPVETVGEIHLRCRKVNSLLGTNIPAAEMADILRGLGMEVTAKEGTVEEYRIKPPSFRVDIGREIDLVEEIARIHGYDNIPVSLPVGAMEPVPRDRRKILEERLRRHLAGTGFSEVITYSFVSPTAADILALDAGDERRKVVRIKNPLTEDQSVMRTTLIYSLLKVMQENANAGDYDLKIFEIGKIFLQGNTGGLPTEKKRLACLMTGMSDKELWSSGESRLDFYDLKGVVESLFASLNLTGIRYCSDALQAFLHPGRSCGIFIDEKSIGYMGEAHPDVLSRLDMKNRALIFEMDVDAISELFSGSVTYKEFSRYPESSRDVAFVIDQDVEADGMLNIALNAREELLENVCIFDVYAGAGVPEGKKSLGLRFTYRSYSATLTDDEVSRVHSKIVQRIIDQTGARVR</sequence>